<name>CRT_PLABE</name>
<dbReference type="EMBL" id="AF314645">
    <property type="protein sequence ID" value="AAG27734.1"/>
    <property type="molecule type" value="mRNA"/>
</dbReference>
<dbReference type="SMR" id="Q9GSD8"/>
<dbReference type="GlyCosmos" id="Q9GSD8">
    <property type="glycosylation" value="1 site, No reported glycans"/>
</dbReference>
<dbReference type="VEuPathDB" id="PlasmoDB:PBANKA_1219500"/>
<dbReference type="GO" id="GO:0005774">
    <property type="term" value="C:vacuolar membrane"/>
    <property type="evidence" value="ECO:0007669"/>
    <property type="project" value="UniProtKB-SubCell"/>
</dbReference>
<dbReference type="GO" id="GO:0042910">
    <property type="term" value="F:xenobiotic transmembrane transporter activity"/>
    <property type="evidence" value="ECO:0007669"/>
    <property type="project" value="InterPro"/>
</dbReference>
<dbReference type="GO" id="GO:0006865">
    <property type="term" value="P:amino acid transport"/>
    <property type="evidence" value="ECO:0007669"/>
    <property type="project" value="UniProtKB-KW"/>
</dbReference>
<dbReference type="InterPro" id="IPR013936">
    <property type="entry name" value="CRT-like"/>
</dbReference>
<dbReference type="InterPro" id="IPR017258">
    <property type="entry name" value="Transprt_Chloroquine"/>
</dbReference>
<dbReference type="PANTHER" id="PTHR31326">
    <property type="entry name" value="PROTEIN CLT2, CHLOROPLASTIC"/>
    <property type="match status" value="1"/>
</dbReference>
<dbReference type="PANTHER" id="PTHR31326:SF1">
    <property type="entry name" value="PROTEIN CLT2, CHLOROPLASTIC"/>
    <property type="match status" value="1"/>
</dbReference>
<dbReference type="Pfam" id="PF08627">
    <property type="entry name" value="CRT-like"/>
    <property type="match status" value="1"/>
</dbReference>
<dbReference type="PIRSF" id="PIRSF037671">
    <property type="entry name" value="Transprt_Chloroquine_res"/>
    <property type="match status" value="1"/>
</dbReference>
<proteinExistence type="evidence at transcript level"/>
<keyword id="KW-0029">Amino-acid transport</keyword>
<keyword id="KW-1015">Disulfide bond</keyword>
<keyword id="KW-0325">Glycoprotein</keyword>
<keyword id="KW-0472">Membrane</keyword>
<keyword id="KW-0812">Transmembrane</keyword>
<keyword id="KW-1133">Transmembrane helix</keyword>
<keyword id="KW-0813">Transport</keyword>
<keyword id="KW-0926">Vacuole</keyword>
<feature type="chain" id="PRO_0000385356" description="Putative chloroquine resistance transporter">
    <location>
        <begin position="1"/>
        <end position="425"/>
    </location>
</feature>
<feature type="topological domain" description="Cytoplasmic" evidence="4">
    <location>
        <begin position="1"/>
        <end position="56"/>
    </location>
</feature>
<feature type="transmembrane region" description="Helical" evidence="3">
    <location>
        <begin position="57"/>
        <end position="77"/>
    </location>
</feature>
<feature type="topological domain" description="Vacuolar" evidence="4">
    <location>
        <begin position="78"/>
        <end position="88"/>
    </location>
</feature>
<feature type="transmembrane region" description="Helical" evidence="3">
    <location>
        <begin position="89"/>
        <end position="109"/>
    </location>
</feature>
<feature type="topological domain" description="Cytoplasmic" evidence="4">
    <location>
        <begin position="110"/>
        <end position="126"/>
    </location>
</feature>
<feature type="transmembrane region" description="Helical" evidence="3">
    <location>
        <begin position="127"/>
        <end position="147"/>
    </location>
</feature>
<feature type="topological domain" description="Vacuolar" evidence="4">
    <location>
        <begin position="148"/>
        <end position="157"/>
    </location>
</feature>
<feature type="transmembrane region" description="Helical" evidence="3">
    <location>
        <begin position="158"/>
        <end position="178"/>
    </location>
</feature>
<feature type="topological domain" description="Cytoplasmic" evidence="4">
    <location>
        <begin position="179"/>
        <end position="181"/>
    </location>
</feature>
<feature type="transmembrane region" description="Helical" evidence="3">
    <location>
        <begin position="182"/>
        <end position="202"/>
    </location>
</feature>
<feature type="topological domain" description="Vacuolar" evidence="4">
    <location>
        <begin position="203"/>
        <end position="210"/>
    </location>
</feature>
<feature type="transmembrane region" description="Helical" evidence="3">
    <location>
        <begin position="211"/>
        <end position="231"/>
    </location>
</feature>
<feature type="topological domain" description="Cytoplasmic" evidence="4">
    <location>
        <begin position="232"/>
        <end position="249"/>
    </location>
</feature>
<feature type="transmembrane region" description="Helical" evidence="3">
    <location>
        <begin position="250"/>
        <end position="270"/>
    </location>
</feature>
<feature type="topological domain" description="Vacuolar" evidence="4">
    <location>
        <begin position="271"/>
        <end position="318"/>
    </location>
</feature>
<feature type="transmembrane region" description="Helical" evidence="3">
    <location>
        <begin position="319"/>
        <end position="339"/>
    </location>
</feature>
<feature type="topological domain" description="Cytoplasmic" evidence="4">
    <location>
        <begin position="340"/>
        <end position="347"/>
    </location>
</feature>
<feature type="transmembrane region" description="Helical" evidence="3">
    <location>
        <begin position="348"/>
        <end position="368"/>
    </location>
</feature>
<feature type="topological domain" description="Vacuolar" evidence="4">
    <location>
        <begin position="369"/>
        <end position="378"/>
    </location>
</feature>
<feature type="transmembrane region" description="Helical" evidence="3">
    <location>
        <begin position="379"/>
        <end position="399"/>
    </location>
</feature>
<feature type="topological domain" description="Cytoplasmic" evidence="4">
    <location>
        <begin position="400"/>
        <end position="425"/>
    </location>
</feature>
<feature type="glycosylation site" description="N-linked (GlcNAc...) asparagine" evidence="3">
    <location>
        <position position="86"/>
    </location>
</feature>
<feature type="disulfide bond" evidence="2">
    <location>
        <begin position="290"/>
        <end position="313"/>
    </location>
</feature>
<feature type="disulfide bond" evidence="2">
    <location>
        <begin position="302"/>
        <end position="310"/>
    </location>
</feature>
<accession>Q9GSD8</accession>
<evidence type="ECO:0000250" key="1">
    <source>
        <dbReference type="UniProtKB" id="Q9N623"/>
    </source>
</evidence>
<evidence type="ECO:0000250" key="2">
    <source>
        <dbReference type="UniProtKB" id="W7FI62"/>
    </source>
</evidence>
<evidence type="ECO:0000255" key="3"/>
<evidence type="ECO:0000305" key="4"/>
<sequence length="425" mass="48937">MTGIKKGKNKKKNMKNDDRYKELDSLITNGSEIGNNSGRSCVKRFFKIIGNEMKNNVYVYLLSILYLCVCVMNKVFAKRTLNKMGNYSFVTSETHNIICIIVFQLLYFIYRKTSSSSVYKNESQKNFGWQFFLISLLDASTVIISMIGLTRTTGNIQSFIMQLIIPVNMYFWFMFLGYRYHLFNYLGAFIILITIAVVETFLSFETQGENSIIFNLIMISAFNTLSFSNMTREVVFKKHKINILRLNAMVVLFQFFTSLLVLPVYNIPFLKEIYMPFSEMSTNINNGLRCLFYGENTIVENCGVGMVKMCDNCEGAWKTFITFSFFNICDNLLACYIIDKFSTMTYTIVSCIQGPAITIAYYFKFLAGDAVRKPRILDFLTLFGYLFGTIIYRIGNIILEKKQVIKSQNSNDSEAELTSIETSRA</sequence>
<protein>
    <recommendedName>
        <fullName>Putative chloroquine resistance transporter</fullName>
    </recommendedName>
    <alternativeName>
        <fullName>Probable transporter cg10</fullName>
        <shortName>pbcg10</shortName>
    </alternativeName>
    <alternativeName>
        <fullName>pfcrt homolog</fullName>
    </alternativeName>
</protein>
<gene>
    <name evidence="4" type="primary">CRT</name>
    <name type="synonym">CG10</name>
</gene>
<reference key="1">
    <citation type="journal article" date="2001" name="J. Infect. Dis.">
        <title>Evidence for different mechanisms of chloroquine resistance in 2 Plasmodium species that cause human malaria.</title>
        <authorList>
            <person name="Nomura T."/>
            <person name="Carlton J.M.-R."/>
            <person name="Baird J.K."/>
            <person name="del Portillo H.A."/>
            <person name="Fryauff D.J."/>
            <person name="Rathore D."/>
            <person name="Fidock D.A."/>
            <person name="Su X.-Z."/>
            <person name="Collins W.E."/>
            <person name="McCutchan T.F."/>
            <person name="Wootton J.C."/>
            <person name="Wellems T.E."/>
        </authorList>
    </citation>
    <scope>NUCLEOTIDE SEQUENCE [MRNA]</scope>
</reference>
<comment type="function">
    <text evidence="1">Nutrient transporter (By similarity). Involved in maintaining the osmotic homeostasis of the digestive vacuole (By similarity).</text>
</comment>
<comment type="subcellular location">
    <subcellularLocation>
        <location evidence="1">Vacuole membrane</location>
        <topology evidence="3">Multi-pass membrane protein</topology>
    </subcellularLocation>
    <text evidence="1">Localizes to the parasite digestive vacuole, the site of chloroquine action.</text>
</comment>
<comment type="similarity">
    <text evidence="4">Belongs to the CRT-like transporter family.</text>
</comment>
<organism>
    <name type="scientific">Plasmodium berghei</name>
    <dbReference type="NCBI Taxonomy" id="5821"/>
    <lineage>
        <taxon>Eukaryota</taxon>
        <taxon>Sar</taxon>
        <taxon>Alveolata</taxon>
        <taxon>Apicomplexa</taxon>
        <taxon>Aconoidasida</taxon>
        <taxon>Haemosporida</taxon>
        <taxon>Plasmodiidae</taxon>
        <taxon>Plasmodium</taxon>
        <taxon>Plasmodium (Vinckeia)</taxon>
    </lineage>
</organism>